<accession>Q2GHC9</accession>
<evidence type="ECO:0000255" key="1">
    <source>
        <dbReference type="HAMAP-Rule" id="MF_00044"/>
    </source>
</evidence>
<name>SYDND_EHRCR</name>
<comment type="function">
    <text evidence="1">Aspartyl-tRNA synthetase with relaxed tRNA specificity since it is able to aspartylate not only its cognate tRNA(Asp) but also tRNA(Asn). Reaction proceeds in two steps: L-aspartate is first activated by ATP to form Asp-AMP and then transferred to the acceptor end of tRNA(Asp/Asn).</text>
</comment>
<comment type="catalytic activity">
    <reaction evidence="1">
        <text>tRNA(Asx) + L-aspartate + ATP = L-aspartyl-tRNA(Asx) + AMP + diphosphate</text>
        <dbReference type="Rhea" id="RHEA:18349"/>
        <dbReference type="Rhea" id="RHEA-COMP:9710"/>
        <dbReference type="Rhea" id="RHEA-COMP:9711"/>
        <dbReference type="ChEBI" id="CHEBI:29991"/>
        <dbReference type="ChEBI" id="CHEBI:30616"/>
        <dbReference type="ChEBI" id="CHEBI:33019"/>
        <dbReference type="ChEBI" id="CHEBI:78442"/>
        <dbReference type="ChEBI" id="CHEBI:78516"/>
        <dbReference type="ChEBI" id="CHEBI:456215"/>
        <dbReference type="EC" id="6.1.1.23"/>
    </reaction>
</comment>
<comment type="subunit">
    <text evidence="1">Homodimer.</text>
</comment>
<comment type="subcellular location">
    <subcellularLocation>
        <location evidence="1">Cytoplasm</location>
    </subcellularLocation>
</comment>
<comment type="similarity">
    <text evidence="1">Belongs to the class-II aminoacyl-tRNA synthetase family. Type 1 subfamily.</text>
</comment>
<proteinExistence type="inferred from homology"/>
<dbReference type="EC" id="6.1.1.23" evidence="1"/>
<dbReference type="EMBL" id="CP000236">
    <property type="protein sequence ID" value="ABD45106.1"/>
    <property type="molecule type" value="Genomic_DNA"/>
</dbReference>
<dbReference type="RefSeq" id="WP_011452538.1">
    <property type="nucleotide sequence ID" value="NC_007799.1"/>
</dbReference>
<dbReference type="SMR" id="Q2GHC9"/>
<dbReference type="STRING" id="205920.ECH_0334"/>
<dbReference type="KEGG" id="ech:ECH_0334"/>
<dbReference type="eggNOG" id="COG0173">
    <property type="taxonomic scope" value="Bacteria"/>
</dbReference>
<dbReference type="HOGENOM" id="CLU_014330_3_2_5"/>
<dbReference type="OrthoDB" id="9802326at2"/>
<dbReference type="Proteomes" id="UP000008320">
    <property type="component" value="Chromosome"/>
</dbReference>
<dbReference type="GO" id="GO:0005737">
    <property type="term" value="C:cytoplasm"/>
    <property type="evidence" value="ECO:0007669"/>
    <property type="project" value="UniProtKB-SubCell"/>
</dbReference>
<dbReference type="GO" id="GO:0004815">
    <property type="term" value="F:aspartate-tRNA ligase activity"/>
    <property type="evidence" value="ECO:0007669"/>
    <property type="project" value="UniProtKB-UniRule"/>
</dbReference>
<dbReference type="GO" id="GO:0050560">
    <property type="term" value="F:aspartate-tRNA(Asn) ligase activity"/>
    <property type="evidence" value="ECO:0007669"/>
    <property type="project" value="UniProtKB-EC"/>
</dbReference>
<dbReference type="GO" id="GO:0005524">
    <property type="term" value="F:ATP binding"/>
    <property type="evidence" value="ECO:0007669"/>
    <property type="project" value="UniProtKB-UniRule"/>
</dbReference>
<dbReference type="GO" id="GO:0003676">
    <property type="term" value="F:nucleic acid binding"/>
    <property type="evidence" value="ECO:0007669"/>
    <property type="project" value="InterPro"/>
</dbReference>
<dbReference type="GO" id="GO:0006422">
    <property type="term" value="P:aspartyl-tRNA aminoacylation"/>
    <property type="evidence" value="ECO:0007669"/>
    <property type="project" value="UniProtKB-UniRule"/>
</dbReference>
<dbReference type="CDD" id="cd00777">
    <property type="entry name" value="AspRS_core"/>
    <property type="match status" value="1"/>
</dbReference>
<dbReference type="CDD" id="cd04317">
    <property type="entry name" value="EcAspRS_like_N"/>
    <property type="match status" value="1"/>
</dbReference>
<dbReference type="Gene3D" id="3.30.930.10">
    <property type="entry name" value="Bira Bifunctional Protein, Domain 2"/>
    <property type="match status" value="1"/>
</dbReference>
<dbReference type="Gene3D" id="3.30.1360.30">
    <property type="entry name" value="GAD-like domain"/>
    <property type="match status" value="1"/>
</dbReference>
<dbReference type="Gene3D" id="2.40.50.140">
    <property type="entry name" value="Nucleic acid-binding proteins"/>
    <property type="match status" value="1"/>
</dbReference>
<dbReference type="HAMAP" id="MF_00044">
    <property type="entry name" value="Asp_tRNA_synth_type1"/>
    <property type="match status" value="1"/>
</dbReference>
<dbReference type="InterPro" id="IPR004364">
    <property type="entry name" value="Aa-tRNA-synt_II"/>
</dbReference>
<dbReference type="InterPro" id="IPR006195">
    <property type="entry name" value="aa-tRNA-synth_II"/>
</dbReference>
<dbReference type="InterPro" id="IPR045864">
    <property type="entry name" value="aa-tRNA-synth_II/BPL/LPL"/>
</dbReference>
<dbReference type="InterPro" id="IPR004524">
    <property type="entry name" value="Asp-tRNA-ligase_1"/>
</dbReference>
<dbReference type="InterPro" id="IPR047089">
    <property type="entry name" value="Asp-tRNA-ligase_1_N"/>
</dbReference>
<dbReference type="InterPro" id="IPR002312">
    <property type="entry name" value="Asp/Asn-tRNA-synth_IIb"/>
</dbReference>
<dbReference type="InterPro" id="IPR047090">
    <property type="entry name" value="AspRS_core"/>
</dbReference>
<dbReference type="InterPro" id="IPR004115">
    <property type="entry name" value="GAD-like_sf"/>
</dbReference>
<dbReference type="InterPro" id="IPR029351">
    <property type="entry name" value="GAD_dom"/>
</dbReference>
<dbReference type="InterPro" id="IPR012340">
    <property type="entry name" value="NA-bd_OB-fold"/>
</dbReference>
<dbReference type="InterPro" id="IPR004365">
    <property type="entry name" value="NA-bd_OB_tRNA"/>
</dbReference>
<dbReference type="NCBIfam" id="TIGR00459">
    <property type="entry name" value="aspS_bact"/>
    <property type="match status" value="1"/>
</dbReference>
<dbReference type="NCBIfam" id="NF001750">
    <property type="entry name" value="PRK00476.1"/>
    <property type="match status" value="1"/>
</dbReference>
<dbReference type="PANTHER" id="PTHR22594:SF5">
    <property type="entry name" value="ASPARTATE--TRNA LIGASE, MITOCHONDRIAL"/>
    <property type="match status" value="1"/>
</dbReference>
<dbReference type="PANTHER" id="PTHR22594">
    <property type="entry name" value="ASPARTYL/LYSYL-TRNA SYNTHETASE"/>
    <property type="match status" value="1"/>
</dbReference>
<dbReference type="Pfam" id="PF02938">
    <property type="entry name" value="GAD"/>
    <property type="match status" value="1"/>
</dbReference>
<dbReference type="Pfam" id="PF00152">
    <property type="entry name" value="tRNA-synt_2"/>
    <property type="match status" value="1"/>
</dbReference>
<dbReference type="Pfam" id="PF01336">
    <property type="entry name" value="tRNA_anti-codon"/>
    <property type="match status" value="1"/>
</dbReference>
<dbReference type="PRINTS" id="PR01042">
    <property type="entry name" value="TRNASYNTHASP"/>
</dbReference>
<dbReference type="SUPFAM" id="SSF55681">
    <property type="entry name" value="Class II aaRS and biotin synthetases"/>
    <property type="match status" value="1"/>
</dbReference>
<dbReference type="SUPFAM" id="SSF55261">
    <property type="entry name" value="GAD domain-like"/>
    <property type="match status" value="1"/>
</dbReference>
<dbReference type="SUPFAM" id="SSF50249">
    <property type="entry name" value="Nucleic acid-binding proteins"/>
    <property type="match status" value="1"/>
</dbReference>
<dbReference type="PROSITE" id="PS50862">
    <property type="entry name" value="AA_TRNA_LIGASE_II"/>
    <property type="match status" value="1"/>
</dbReference>
<organism>
    <name type="scientific">Ehrlichia chaffeensis (strain ATCC CRL-10679 / Arkansas)</name>
    <dbReference type="NCBI Taxonomy" id="205920"/>
    <lineage>
        <taxon>Bacteria</taxon>
        <taxon>Pseudomonadati</taxon>
        <taxon>Pseudomonadota</taxon>
        <taxon>Alphaproteobacteria</taxon>
        <taxon>Rickettsiales</taxon>
        <taxon>Anaplasmataceae</taxon>
        <taxon>Ehrlichia</taxon>
    </lineage>
</organism>
<sequence>MNIYRTHLCDQLRKEHINQEVTLSGWIYRKRDHGKIIFVDLRDHYGITQLVFNEADNQNFQLITHLRLESVITVKGIVVARDSSTINTAVSTGFIEVVVKHVIIEGEADPLPLNITSTQDYPEEIRLKYRFLDLRRDKVKNNIILRSKIISELRKSMEAMGFIEIQTPILTSSSPEGARDYLVPSRIHHGKFYALPQAPQLFKQILMVSGFDKYFQIAPCFRDEDARSDRSPGEFYQLDIEMSFVSQEDVFNVIEPVLLNVFSKFSNKTIDKEFPRISYHDAMLHYGSDKPDLRNPLIIQDVTEIFRDSQFNIFNSNIKQGMVVRAIPAPNTATNPRSFFDNKIEFAKTLGAQGLGYITFNDDFSAKGPIAKFLDEERLNRIKSICNLQPGDSVFFVSETEDKATELAGEVRTLLGKELNLIEKDTFRFCWIIDFPYFKYDKKEKSINFFHNPFSMPQGGLEALNNQNPLDILAYQYDIVCNGIEISSGAIRNHKLDIMYKAFSIAGYTKEMVDQKFNSLTRAFKFGAPPHGGIAPGIDRMVMLLADATNIREVICFPLNQSGEDLLMSAPSEIDKEHLKLLSLSITKKS</sequence>
<gene>
    <name evidence="1" type="primary">aspS</name>
    <name type="ordered locus">ECH_0334</name>
</gene>
<keyword id="KW-0030">Aminoacyl-tRNA synthetase</keyword>
<keyword id="KW-0067">ATP-binding</keyword>
<keyword id="KW-0963">Cytoplasm</keyword>
<keyword id="KW-0436">Ligase</keyword>
<keyword id="KW-0547">Nucleotide-binding</keyword>
<keyword id="KW-0648">Protein biosynthesis</keyword>
<keyword id="KW-1185">Reference proteome</keyword>
<feature type="chain" id="PRO_1000006673" description="Aspartate--tRNA(Asp/Asn) ligase">
    <location>
        <begin position="1"/>
        <end position="590"/>
    </location>
</feature>
<feature type="region of interest" description="Aspartate" evidence="1">
    <location>
        <begin position="200"/>
        <end position="203"/>
    </location>
</feature>
<feature type="binding site" evidence="1">
    <location>
        <position position="176"/>
    </location>
    <ligand>
        <name>L-aspartate</name>
        <dbReference type="ChEBI" id="CHEBI:29991"/>
    </ligand>
</feature>
<feature type="binding site" evidence="1">
    <location>
        <begin position="222"/>
        <end position="224"/>
    </location>
    <ligand>
        <name>ATP</name>
        <dbReference type="ChEBI" id="CHEBI:30616"/>
    </ligand>
</feature>
<feature type="binding site" evidence="1">
    <location>
        <position position="222"/>
    </location>
    <ligand>
        <name>L-aspartate</name>
        <dbReference type="ChEBI" id="CHEBI:29991"/>
    </ligand>
</feature>
<feature type="binding site" evidence="1">
    <location>
        <position position="451"/>
    </location>
    <ligand>
        <name>L-aspartate</name>
        <dbReference type="ChEBI" id="CHEBI:29991"/>
    </ligand>
</feature>
<feature type="binding site" evidence="1">
    <location>
        <position position="485"/>
    </location>
    <ligand>
        <name>ATP</name>
        <dbReference type="ChEBI" id="CHEBI:30616"/>
    </ligand>
</feature>
<feature type="binding site" evidence="1">
    <location>
        <position position="492"/>
    </location>
    <ligand>
        <name>L-aspartate</name>
        <dbReference type="ChEBI" id="CHEBI:29991"/>
    </ligand>
</feature>
<feature type="binding site" evidence="1">
    <location>
        <begin position="537"/>
        <end position="540"/>
    </location>
    <ligand>
        <name>ATP</name>
        <dbReference type="ChEBI" id="CHEBI:30616"/>
    </ligand>
</feature>
<feature type="site" description="Important for tRNA non-discrimination" evidence="1">
    <location>
        <position position="33"/>
    </location>
</feature>
<protein>
    <recommendedName>
        <fullName evidence="1">Aspartate--tRNA(Asp/Asn) ligase</fullName>
        <ecNumber evidence="1">6.1.1.23</ecNumber>
    </recommendedName>
    <alternativeName>
        <fullName evidence="1">Aspartyl-tRNA synthetase</fullName>
        <shortName evidence="1">AspRS</shortName>
    </alternativeName>
    <alternativeName>
        <fullName evidence="1">Non-discriminating aspartyl-tRNA synthetase</fullName>
        <shortName evidence="1">ND-AspRS</shortName>
    </alternativeName>
</protein>
<reference key="1">
    <citation type="journal article" date="2006" name="PLoS Genet.">
        <title>Comparative genomics of emerging human ehrlichiosis agents.</title>
        <authorList>
            <person name="Dunning Hotopp J.C."/>
            <person name="Lin M."/>
            <person name="Madupu R."/>
            <person name="Crabtree J."/>
            <person name="Angiuoli S.V."/>
            <person name="Eisen J.A."/>
            <person name="Seshadri R."/>
            <person name="Ren Q."/>
            <person name="Wu M."/>
            <person name="Utterback T.R."/>
            <person name="Smith S."/>
            <person name="Lewis M."/>
            <person name="Khouri H."/>
            <person name="Zhang C."/>
            <person name="Niu H."/>
            <person name="Lin Q."/>
            <person name="Ohashi N."/>
            <person name="Zhi N."/>
            <person name="Nelson W.C."/>
            <person name="Brinkac L.M."/>
            <person name="Dodson R.J."/>
            <person name="Rosovitz M.J."/>
            <person name="Sundaram J.P."/>
            <person name="Daugherty S.C."/>
            <person name="Davidsen T."/>
            <person name="Durkin A.S."/>
            <person name="Gwinn M.L."/>
            <person name="Haft D.H."/>
            <person name="Selengut J.D."/>
            <person name="Sullivan S.A."/>
            <person name="Zafar N."/>
            <person name="Zhou L."/>
            <person name="Benahmed F."/>
            <person name="Forberger H."/>
            <person name="Halpin R."/>
            <person name="Mulligan S."/>
            <person name="Robinson J."/>
            <person name="White O."/>
            <person name="Rikihisa Y."/>
            <person name="Tettelin H."/>
        </authorList>
    </citation>
    <scope>NUCLEOTIDE SEQUENCE [LARGE SCALE GENOMIC DNA]</scope>
    <source>
        <strain>ATCC CRL-10679 / Arkansas</strain>
    </source>
</reference>